<sequence>MTVGKSSKMLQHIDYRMRCILQDGRIFIGTFKAFDKHMNLILCDCDEFRKIKPKNAKQPEREEKRVLGLVLLRGENLVSMTVEGPPPKDTGIARVPLAGAAGGPGVGRAAGRGVPAGVPIPQAPAGLAGPVRGVGGPSQQVMTPQGRGTVAAAAVAATASIAGAPTQYPPGRGTPPPPVGRATPPPGIMAPPPGMRPPMGPPIGLPPARGTPIGMPPPGMRPPPPGIRGPPPPGMRPPRP</sequence>
<comment type="function">
    <text>May be involved in tissue-specific alternative RNA processing events.</text>
</comment>
<comment type="subunit">
    <text evidence="1">Interacts with TDRD3.</text>
</comment>
<comment type="subcellular location">
    <subcellularLocation>
        <location>Nucleus</location>
    </subcellularLocation>
</comment>
<comment type="tissue specificity">
    <text evidence="5">Expressed in brain and embryonic stem (ES) cells.</text>
</comment>
<comment type="miscellaneous">
    <text>Encoded on a bicistronic transcript that code for two proteins, SNRPN and SNURF.</text>
</comment>
<comment type="similarity">
    <text evidence="6">Belongs to the snRNP SmB/SmN family.</text>
</comment>
<feature type="chain" id="PRO_0000125524" description="Small nuclear ribonucleoprotein-associated protein N">
    <location>
        <begin position="1"/>
        <end position="240"/>
    </location>
</feature>
<feature type="domain" description="Sm" evidence="3">
    <location>
        <begin position="4"/>
        <end position="86"/>
    </location>
</feature>
<feature type="repeat">
    <location>
        <begin position="175"/>
        <end position="181"/>
    </location>
</feature>
<feature type="repeat">
    <location>
        <begin position="191"/>
        <end position="196"/>
    </location>
</feature>
<feature type="repeat">
    <location>
        <begin position="216"/>
        <end position="221"/>
    </location>
</feature>
<feature type="repeat">
    <location>
        <begin position="222"/>
        <end position="228"/>
    </location>
</feature>
<feature type="repeat">
    <location>
        <begin position="230"/>
        <end position="236"/>
    </location>
</feature>
<feature type="region of interest" description="Disordered" evidence="4">
    <location>
        <begin position="163"/>
        <end position="240"/>
    </location>
</feature>
<feature type="region of interest" description="Repeat-rich region">
    <location>
        <begin position="175"/>
        <end position="236"/>
    </location>
</feature>
<feature type="compositionally biased region" description="Pro residues" evidence="4">
    <location>
        <begin position="172"/>
        <end position="205"/>
    </location>
</feature>
<feature type="compositionally biased region" description="Pro residues" evidence="4">
    <location>
        <begin position="214"/>
        <end position="240"/>
    </location>
</feature>
<feature type="modified residue" description="Asymmetric dimethylarginine; alternate" evidence="2">
    <location>
        <position position="108"/>
    </location>
</feature>
<feature type="modified residue" description="Dimethylated arginine; alternate" evidence="2">
    <location>
        <position position="108"/>
    </location>
</feature>
<feature type="modified residue" description="Omega-N-methylarginine; alternate" evidence="7">
    <location>
        <position position="108"/>
    </location>
</feature>
<feature type="modified residue" description="Asymmetric dimethylarginine; alternate" evidence="2">
    <location>
        <position position="112"/>
    </location>
</feature>
<feature type="modified residue" description="Dimethylated arginine; alternate" evidence="2">
    <location>
        <position position="112"/>
    </location>
</feature>
<feature type="modified residue" description="Omega-N-methylarginine; alternate" evidence="2">
    <location>
        <position position="112"/>
    </location>
</feature>
<feature type="modified residue" description="Omega-N-methylarginine" evidence="2">
    <location>
        <position position="147"/>
    </location>
</feature>
<feature type="modified residue" description="Omega-N-methylarginine" evidence="7">
    <location>
        <position position="172"/>
    </location>
</feature>
<organism>
    <name type="scientific">Mus musculus</name>
    <name type="common">Mouse</name>
    <dbReference type="NCBI Taxonomy" id="10090"/>
    <lineage>
        <taxon>Eukaryota</taxon>
        <taxon>Metazoa</taxon>
        <taxon>Chordata</taxon>
        <taxon>Craniata</taxon>
        <taxon>Vertebrata</taxon>
        <taxon>Euteleostomi</taxon>
        <taxon>Mammalia</taxon>
        <taxon>Eutheria</taxon>
        <taxon>Euarchontoglires</taxon>
        <taxon>Glires</taxon>
        <taxon>Rodentia</taxon>
        <taxon>Myomorpha</taxon>
        <taxon>Muroidea</taxon>
        <taxon>Muridae</taxon>
        <taxon>Murinae</taxon>
        <taxon>Mus</taxon>
        <taxon>Mus</taxon>
    </lineage>
</organism>
<dbReference type="EMBL" id="X62648">
    <property type="protein sequence ID" value="CAA44517.1"/>
    <property type="molecule type" value="mRNA"/>
</dbReference>
<dbReference type="EMBL" id="X63730">
    <property type="protein sequence ID" value="CAA45273.1"/>
    <property type="molecule type" value="mRNA"/>
</dbReference>
<dbReference type="EMBL" id="S62288">
    <property type="protein sequence ID" value="AAB27138.1"/>
    <property type="molecule type" value="mRNA"/>
</dbReference>
<dbReference type="EMBL" id="AK013607">
    <property type="protein sequence ID" value="BAB28927.1"/>
    <property type="molecule type" value="mRNA"/>
</dbReference>
<dbReference type="EMBL" id="BC019589">
    <property type="protein sequence ID" value="AAH19589.1"/>
    <property type="molecule type" value="mRNA"/>
</dbReference>
<dbReference type="EMBL" id="BC024880">
    <property type="protein sequence ID" value="AAH24880.1"/>
    <property type="molecule type" value="mRNA"/>
</dbReference>
<dbReference type="CCDS" id="CCDS39974.1"/>
<dbReference type="PIR" id="S20068">
    <property type="entry name" value="S20068"/>
</dbReference>
<dbReference type="RefSeq" id="NP_001076430.1">
    <property type="nucleotide sequence ID" value="NM_001082961.2"/>
</dbReference>
<dbReference type="RefSeq" id="NP_001076431.1">
    <property type="nucleotide sequence ID" value="NM_001082962.2"/>
</dbReference>
<dbReference type="RefSeq" id="NP_001336619.1">
    <property type="nucleotide sequence ID" value="NM_001349690.1"/>
</dbReference>
<dbReference type="RefSeq" id="NP_001336620.1">
    <property type="nucleotide sequence ID" value="NM_001349691.1"/>
</dbReference>
<dbReference type="RefSeq" id="NP_001336621.1">
    <property type="nucleotide sequence ID" value="NM_001349692.1"/>
</dbReference>
<dbReference type="RefSeq" id="NP_001336622.1">
    <property type="nucleotide sequence ID" value="NM_001349693.1"/>
</dbReference>
<dbReference type="RefSeq" id="NP_001336623.1">
    <property type="nucleotide sequence ID" value="NM_001349694.1"/>
</dbReference>
<dbReference type="RefSeq" id="NP_001336624.1">
    <property type="nucleotide sequence ID" value="NM_001349695.1"/>
</dbReference>
<dbReference type="RefSeq" id="NP_038698.1">
    <property type="nucleotide sequence ID" value="NM_013670.4"/>
</dbReference>
<dbReference type="SMR" id="P63163"/>
<dbReference type="BioGRID" id="203381">
    <property type="interactions" value="5"/>
</dbReference>
<dbReference type="FunCoup" id="P63163">
    <property type="interactions" value="1527"/>
</dbReference>
<dbReference type="IntAct" id="P63163">
    <property type="interactions" value="3"/>
</dbReference>
<dbReference type="MINT" id="P63163"/>
<dbReference type="STRING" id="10090.ENSMUSP00000096003"/>
<dbReference type="iPTMnet" id="P63163"/>
<dbReference type="PhosphoSitePlus" id="P63163"/>
<dbReference type="SwissPalm" id="P63163"/>
<dbReference type="jPOST" id="P63163"/>
<dbReference type="PaxDb" id="10090-ENSMUSP00000096003"/>
<dbReference type="PeptideAtlas" id="P63163"/>
<dbReference type="ProteomicsDB" id="256784"/>
<dbReference type="Pumba" id="P63163"/>
<dbReference type="Antibodypedia" id="22280">
    <property type="antibodies" value="161 antibodies from 26 providers"/>
</dbReference>
<dbReference type="DNASU" id="20646"/>
<dbReference type="Ensembl" id="ENSMUST00000059305.17">
    <property type="protein sequence ID" value="ENSMUSP00000055941.11"/>
    <property type="gene ID" value="ENSMUSG00000102252.6"/>
</dbReference>
<dbReference type="Ensembl" id="ENSMUST00000098402.5">
    <property type="protein sequence ID" value="ENSMUSP00000096003.4"/>
    <property type="gene ID" value="ENSMUSG00000102252.6"/>
</dbReference>
<dbReference type="GeneID" id="20646"/>
<dbReference type="KEGG" id="mmu:20646"/>
<dbReference type="UCSC" id="uc009heq.3">
    <property type="organism name" value="mouse"/>
</dbReference>
<dbReference type="AGR" id="MGI:98347"/>
<dbReference type="CTD" id="6638"/>
<dbReference type="MGI" id="MGI:98347">
    <property type="gene designation" value="Snrpn"/>
</dbReference>
<dbReference type="VEuPathDB" id="HostDB:ENSMUSG00000102252"/>
<dbReference type="eggNOG" id="KOG3168">
    <property type="taxonomic scope" value="Eukaryota"/>
</dbReference>
<dbReference type="GeneTree" id="ENSGT00940000158222"/>
<dbReference type="HOGENOM" id="CLU_076902_1_0_1"/>
<dbReference type="InParanoid" id="P63163"/>
<dbReference type="OMA" id="MGTTKMV"/>
<dbReference type="OrthoDB" id="2020720at2759"/>
<dbReference type="PhylomeDB" id="P63163"/>
<dbReference type="TreeFam" id="TF314232"/>
<dbReference type="Reactome" id="R-MMU-72163">
    <property type="pathway name" value="mRNA Splicing - Major Pathway"/>
</dbReference>
<dbReference type="BioGRID-ORCS" id="20646">
    <property type="hits" value="3 hits in 83 CRISPR screens"/>
</dbReference>
<dbReference type="ChiTaRS" id="Snrpn">
    <property type="organism name" value="mouse"/>
</dbReference>
<dbReference type="PRO" id="PR:P63163"/>
<dbReference type="Proteomes" id="UP000000589">
    <property type="component" value="Chromosome 7"/>
</dbReference>
<dbReference type="RNAct" id="P63163">
    <property type="molecule type" value="protein"/>
</dbReference>
<dbReference type="Bgee" id="ENSMUSG00000102252">
    <property type="expression patterns" value="Expressed in dentate gyrus of hippocampal formation granule cell and 263 other cell types or tissues"/>
</dbReference>
<dbReference type="ExpressionAtlas" id="P63163">
    <property type="expression patterns" value="baseline and differential"/>
</dbReference>
<dbReference type="GO" id="GO:0005654">
    <property type="term" value="C:nucleoplasm"/>
    <property type="evidence" value="ECO:0007669"/>
    <property type="project" value="Ensembl"/>
</dbReference>
<dbReference type="GO" id="GO:0005634">
    <property type="term" value="C:nucleus"/>
    <property type="evidence" value="ECO:0000304"/>
    <property type="project" value="MGI"/>
</dbReference>
<dbReference type="GO" id="GO:1990904">
    <property type="term" value="C:ribonucleoprotein complex"/>
    <property type="evidence" value="ECO:0007669"/>
    <property type="project" value="UniProtKB-KW"/>
</dbReference>
<dbReference type="GO" id="GO:0003723">
    <property type="term" value="F:RNA binding"/>
    <property type="evidence" value="ECO:0007669"/>
    <property type="project" value="UniProtKB-KW"/>
</dbReference>
<dbReference type="CDD" id="cd01717">
    <property type="entry name" value="Sm_B"/>
    <property type="match status" value="1"/>
</dbReference>
<dbReference type="FunFam" id="2.30.30.100:FF:000004">
    <property type="entry name" value="Small nuclear ribonucleoprotein-associated proteins"/>
    <property type="match status" value="1"/>
</dbReference>
<dbReference type="Gene3D" id="2.30.30.100">
    <property type="match status" value="1"/>
</dbReference>
<dbReference type="InterPro" id="IPR010920">
    <property type="entry name" value="LSM_dom_sf"/>
</dbReference>
<dbReference type="InterPro" id="IPR047575">
    <property type="entry name" value="Sm"/>
</dbReference>
<dbReference type="InterPro" id="IPR001163">
    <property type="entry name" value="Sm_dom_euk/arc"/>
</dbReference>
<dbReference type="InterPro" id="IPR017131">
    <property type="entry name" value="snRNP-assoc_SmB/SmN"/>
</dbReference>
<dbReference type="PANTHER" id="PTHR14508">
    <property type="entry name" value="SNRPN UPSTREAM READING FRAME PROTEIN, SNURF"/>
    <property type="match status" value="1"/>
</dbReference>
<dbReference type="PANTHER" id="PTHR14508:SF2">
    <property type="entry name" value="SNRPN UPSTREAM READING FRAME PROTEIN-RELATED"/>
    <property type="match status" value="1"/>
</dbReference>
<dbReference type="Pfam" id="PF01423">
    <property type="entry name" value="LSM"/>
    <property type="match status" value="1"/>
</dbReference>
<dbReference type="PIRSF" id="PIRSF037187">
    <property type="entry name" value="snRNP_SmB/SmN"/>
    <property type="match status" value="1"/>
</dbReference>
<dbReference type="SMART" id="SM00651">
    <property type="entry name" value="Sm"/>
    <property type="match status" value="1"/>
</dbReference>
<dbReference type="SUPFAM" id="SSF50182">
    <property type="entry name" value="Sm-like ribonucleoproteins"/>
    <property type="match status" value="1"/>
</dbReference>
<dbReference type="PROSITE" id="PS52002">
    <property type="entry name" value="SM"/>
    <property type="match status" value="1"/>
</dbReference>
<protein>
    <recommendedName>
        <fullName>Small nuclear ribonucleoprotein-associated protein N</fullName>
        <shortName>snRNP-N</shortName>
    </recommendedName>
    <alternativeName>
        <fullName>Sm protein D</fullName>
        <shortName>Sm-D</shortName>
    </alternativeName>
    <alternativeName>
        <fullName>Sm protein N</fullName>
        <shortName>Sm-N</shortName>
        <shortName>SmN</shortName>
    </alternativeName>
    <alternativeName>
        <fullName>Tissue-specific-splicing protein</fullName>
    </alternativeName>
</protein>
<proteinExistence type="evidence at protein level"/>
<keyword id="KW-0488">Methylation</keyword>
<keyword id="KW-0539">Nucleus</keyword>
<keyword id="KW-1185">Reference proteome</keyword>
<keyword id="KW-0677">Repeat</keyword>
<keyword id="KW-0687">Ribonucleoprotein</keyword>
<keyword id="KW-0694">RNA-binding</keyword>
<gene>
    <name type="primary">Snrpn</name>
    <name type="synonym">Smn</name>
</gene>
<evidence type="ECO:0000250" key="1"/>
<evidence type="ECO:0000250" key="2">
    <source>
        <dbReference type="UniProtKB" id="P14678"/>
    </source>
</evidence>
<evidence type="ECO:0000255" key="3">
    <source>
        <dbReference type="PROSITE-ProRule" id="PRU01346"/>
    </source>
</evidence>
<evidence type="ECO:0000256" key="4">
    <source>
        <dbReference type="SAM" id="MobiDB-lite"/>
    </source>
</evidence>
<evidence type="ECO:0000269" key="5">
    <source>
    </source>
</evidence>
<evidence type="ECO:0000305" key="6"/>
<evidence type="ECO:0007744" key="7">
    <source>
    </source>
</evidence>
<accession>P63163</accession>
<accession>P14648</accession>
<accession>P17135</accession>
<name>RSMN_MOUSE</name>
<reference key="1">
    <citation type="journal article" date="1991" name="Nucleic Acids Res.">
        <title>Cloning and sequencing of a mouse embryonal carcinoma cell mRNA encoding the tissue specific RNA splicing protein SmN.</title>
        <authorList>
            <person name="Gerrelli D."/>
            <person name="Sharp N.G."/>
            <person name="Latchman D.S."/>
        </authorList>
    </citation>
    <scope>NUCLEOTIDE SEQUENCE [MRNA]</scope>
</reference>
<reference key="2">
    <citation type="journal article" date="1993" name="J. Mol. Cell. Cardiol.">
        <title>The cardiac form of the tissue-specific SmN protein is identical to the brain and embryonic forms of the protein.</title>
        <authorList>
            <person name="Gerrelli D."/>
            <person name="Grimaldi K."/>
            <person name="Horn D."/>
            <person name="Mahadeva U."/>
            <person name="Sharpe N."/>
            <person name="Latchman D.S."/>
        </authorList>
    </citation>
    <scope>NUCLEOTIDE SEQUENCE [MRNA]</scope>
    <source>
        <tissue>Heart</tissue>
    </source>
</reference>
<reference key="3">
    <citation type="journal article" date="2005" name="Science">
        <title>The transcriptional landscape of the mammalian genome.</title>
        <authorList>
            <person name="Carninci P."/>
            <person name="Kasukawa T."/>
            <person name="Katayama S."/>
            <person name="Gough J."/>
            <person name="Frith M.C."/>
            <person name="Maeda N."/>
            <person name="Oyama R."/>
            <person name="Ravasi T."/>
            <person name="Lenhard B."/>
            <person name="Wells C."/>
            <person name="Kodzius R."/>
            <person name="Shimokawa K."/>
            <person name="Bajic V.B."/>
            <person name="Brenner S.E."/>
            <person name="Batalov S."/>
            <person name="Forrest A.R."/>
            <person name="Zavolan M."/>
            <person name="Davis M.J."/>
            <person name="Wilming L.G."/>
            <person name="Aidinis V."/>
            <person name="Allen J.E."/>
            <person name="Ambesi-Impiombato A."/>
            <person name="Apweiler R."/>
            <person name="Aturaliya R.N."/>
            <person name="Bailey T.L."/>
            <person name="Bansal M."/>
            <person name="Baxter L."/>
            <person name="Beisel K.W."/>
            <person name="Bersano T."/>
            <person name="Bono H."/>
            <person name="Chalk A.M."/>
            <person name="Chiu K.P."/>
            <person name="Choudhary V."/>
            <person name="Christoffels A."/>
            <person name="Clutterbuck D.R."/>
            <person name="Crowe M.L."/>
            <person name="Dalla E."/>
            <person name="Dalrymple B.P."/>
            <person name="de Bono B."/>
            <person name="Della Gatta G."/>
            <person name="di Bernardo D."/>
            <person name="Down T."/>
            <person name="Engstrom P."/>
            <person name="Fagiolini M."/>
            <person name="Faulkner G."/>
            <person name="Fletcher C.F."/>
            <person name="Fukushima T."/>
            <person name="Furuno M."/>
            <person name="Futaki S."/>
            <person name="Gariboldi M."/>
            <person name="Georgii-Hemming P."/>
            <person name="Gingeras T.R."/>
            <person name="Gojobori T."/>
            <person name="Green R.E."/>
            <person name="Gustincich S."/>
            <person name="Harbers M."/>
            <person name="Hayashi Y."/>
            <person name="Hensch T.K."/>
            <person name="Hirokawa N."/>
            <person name="Hill D."/>
            <person name="Huminiecki L."/>
            <person name="Iacono M."/>
            <person name="Ikeo K."/>
            <person name="Iwama A."/>
            <person name="Ishikawa T."/>
            <person name="Jakt M."/>
            <person name="Kanapin A."/>
            <person name="Katoh M."/>
            <person name="Kawasawa Y."/>
            <person name="Kelso J."/>
            <person name="Kitamura H."/>
            <person name="Kitano H."/>
            <person name="Kollias G."/>
            <person name="Krishnan S.P."/>
            <person name="Kruger A."/>
            <person name="Kummerfeld S.K."/>
            <person name="Kurochkin I.V."/>
            <person name="Lareau L.F."/>
            <person name="Lazarevic D."/>
            <person name="Lipovich L."/>
            <person name="Liu J."/>
            <person name="Liuni S."/>
            <person name="McWilliam S."/>
            <person name="Madan Babu M."/>
            <person name="Madera M."/>
            <person name="Marchionni L."/>
            <person name="Matsuda H."/>
            <person name="Matsuzawa S."/>
            <person name="Miki H."/>
            <person name="Mignone F."/>
            <person name="Miyake S."/>
            <person name="Morris K."/>
            <person name="Mottagui-Tabar S."/>
            <person name="Mulder N."/>
            <person name="Nakano N."/>
            <person name="Nakauchi H."/>
            <person name="Ng P."/>
            <person name="Nilsson R."/>
            <person name="Nishiguchi S."/>
            <person name="Nishikawa S."/>
            <person name="Nori F."/>
            <person name="Ohara O."/>
            <person name="Okazaki Y."/>
            <person name="Orlando V."/>
            <person name="Pang K.C."/>
            <person name="Pavan W.J."/>
            <person name="Pavesi G."/>
            <person name="Pesole G."/>
            <person name="Petrovsky N."/>
            <person name="Piazza S."/>
            <person name="Reed J."/>
            <person name="Reid J.F."/>
            <person name="Ring B.Z."/>
            <person name="Ringwald M."/>
            <person name="Rost B."/>
            <person name="Ruan Y."/>
            <person name="Salzberg S.L."/>
            <person name="Sandelin A."/>
            <person name="Schneider C."/>
            <person name="Schoenbach C."/>
            <person name="Sekiguchi K."/>
            <person name="Semple C.A."/>
            <person name="Seno S."/>
            <person name="Sessa L."/>
            <person name="Sheng Y."/>
            <person name="Shibata Y."/>
            <person name="Shimada H."/>
            <person name="Shimada K."/>
            <person name="Silva D."/>
            <person name="Sinclair B."/>
            <person name="Sperling S."/>
            <person name="Stupka E."/>
            <person name="Sugiura K."/>
            <person name="Sultana R."/>
            <person name="Takenaka Y."/>
            <person name="Taki K."/>
            <person name="Tammoja K."/>
            <person name="Tan S.L."/>
            <person name="Tang S."/>
            <person name="Taylor M.S."/>
            <person name="Tegner J."/>
            <person name="Teichmann S.A."/>
            <person name="Ueda H.R."/>
            <person name="van Nimwegen E."/>
            <person name="Verardo R."/>
            <person name="Wei C.L."/>
            <person name="Yagi K."/>
            <person name="Yamanishi H."/>
            <person name="Zabarovsky E."/>
            <person name="Zhu S."/>
            <person name="Zimmer A."/>
            <person name="Hide W."/>
            <person name="Bult C."/>
            <person name="Grimmond S.M."/>
            <person name="Teasdale R.D."/>
            <person name="Liu E.T."/>
            <person name="Brusic V."/>
            <person name="Quackenbush J."/>
            <person name="Wahlestedt C."/>
            <person name="Mattick J.S."/>
            <person name="Hume D.A."/>
            <person name="Kai C."/>
            <person name="Sasaki D."/>
            <person name="Tomaru Y."/>
            <person name="Fukuda S."/>
            <person name="Kanamori-Katayama M."/>
            <person name="Suzuki M."/>
            <person name="Aoki J."/>
            <person name="Arakawa T."/>
            <person name="Iida J."/>
            <person name="Imamura K."/>
            <person name="Itoh M."/>
            <person name="Kato T."/>
            <person name="Kawaji H."/>
            <person name="Kawagashira N."/>
            <person name="Kawashima T."/>
            <person name="Kojima M."/>
            <person name="Kondo S."/>
            <person name="Konno H."/>
            <person name="Nakano K."/>
            <person name="Ninomiya N."/>
            <person name="Nishio T."/>
            <person name="Okada M."/>
            <person name="Plessy C."/>
            <person name="Shibata K."/>
            <person name="Shiraki T."/>
            <person name="Suzuki S."/>
            <person name="Tagami M."/>
            <person name="Waki K."/>
            <person name="Watahiki A."/>
            <person name="Okamura-Oho Y."/>
            <person name="Suzuki H."/>
            <person name="Kawai J."/>
            <person name="Hayashizaki Y."/>
        </authorList>
    </citation>
    <scope>NUCLEOTIDE SEQUENCE [LARGE SCALE MRNA]</scope>
    <source>
        <strain>C57BL/6J</strain>
        <tissue>Hippocampus</tissue>
    </source>
</reference>
<reference key="4">
    <citation type="journal article" date="2004" name="Genome Res.">
        <title>The status, quality, and expansion of the NIH full-length cDNA project: the Mammalian Gene Collection (MGC).</title>
        <authorList>
            <consortium name="The MGC Project Team"/>
        </authorList>
    </citation>
    <scope>NUCLEOTIDE SEQUENCE [LARGE SCALE MRNA]</scope>
    <source>
        <strain>C57BL/6J</strain>
        <tissue>Mammary tumor</tissue>
    </source>
</reference>
<reference key="5">
    <citation type="journal article" date="1999" name="Proc. Natl. Acad. Sci. U.S.A.">
        <title>An imprinted, mammalian bicistronic transcript encodes two independent proteins.</title>
        <authorList>
            <person name="Gray T.A."/>
            <person name="Saitoh S."/>
            <person name="Nicholls R.D."/>
        </authorList>
    </citation>
    <scope>TISSUE SPECIFICITY</scope>
</reference>
<reference key="6">
    <citation type="journal article" date="2014" name="Mol. Cell. Proteomics">
        <title>Immunoaffinity enrichment and mass spectrometry analysis of protein methylation.</title>
        <authorList>
            <person name="Guo A."/>
            <person name="Gu H."/>
            <person name="Zhou J."/>
            <person name="Mulhern D."/>
            <person name="Wang Y."/>
            <person name="Lee K.A."/>
            <person name="Yang V."/>
            <person name="Aguiar M."/>
            <person name="Kornhauser J."/>
            <person name="Jia X."/>
            <person name="Ren J."/>
            <person name="Beausoleil S.A."/>
            <person name="Silva J.C."/>
            <person name="Vemulapalli V."/>
            <person name="Bedford M.T."/>
            <person name="Comb M.J."/>
        </authorList>
    </citation>
    <scope>METHYLATION [LARGE SCALE ANALYSIS] AT ARG-108 AND ARG-172</scope>
    <scope>IDENTIFICATION BY MASS SPECTROMETRY [LARGE SCALE ANALYSIS]</scope>
    <source>
        <tissue>Brain</tissue>
        <tissue>Embryo</tissue>
    </source>
</reference>